<reference key="1">
    <citation type="journal article" date="2001" name="Nature">
        <title>Genome sequence of enterohaemorrhagic Escherichia coli O157:H7.</title>
        <authorList>
            <person name="Perna N.T."/>
            <person name="Plunkett G. III"/>
            <person name="Burland V."/>
            <person name="Mau B."/>
            <person name="Glasner J.D."/>
            <person name="Rose D.J."/>
            <person name="Mayhew G.F."/>
            <person name="Evans P.S."/>
            <person name="Gregor J."/>
            <person name="Kirkpatrick H.A."/>
            <person name="Posfai G."/>
            <person name="Hackett J."/>
            <person name="Klink S."/>
            <person name="Boutin A."/>
            <person name="Shao Y."/>
            <person name="Miller L."/>
            <person name="Grotbeck E.J."/>
            <person name="Davis N.W."/>
            <person name="Lim A."/>
            <person name="Dimalanta E.T."/>
            <person name="Potamousis K."/>
            <person name="Apodaca J."/>
            <person name="Anantharaman T.S."/>
            <person name="Lin J."/>
            <person name="Yen G."/>
            <person name="Schwartz D.C."/>
            <person name="Welch R.A."/>
            <person name="Blattner F.R."/>
        </authorList>
    </citation>
    <scope>NUCLEOTIDE SEQUENCE [LARGE SCALE GENOMIC DNA]</scope>
    <source>
        <strain>O157:H7 / EDL933 / ATCC 700927 / EHEC</strain>
    </source>
</reference>
<reference key="2">
    <citation type="journal article" date="2001" name="DNA Res.">
        <title>Complete genome sequence of enterohemorrhagic Escherichia coli O157:H7 and genomic comparison with a laboratory strain K-12.</title>
        <authorList>
            <person name="Hayashi T."/>
            <person name="Makino K."/>
            <person name="Ohnishi M."/>
            <person name="Kurokawa K."/>
            <person name="Ishii K."/>
            <person name="Yokoyama K."/>
            <person name="Han C.-G."/>
            <person name="Ohtsubo E."/>
            <person name="Nakayama K."/>
            <person name="Murata T."/>
            <person name="Tanaka M."/>
            <person name="Tobe T."/>
            <person name="Iida T."/>
            <person name="Takami H."/>
            <person name="Honda T."/>
            <person name="Sasakawa C."/>
            <person name="Ogasawara N."/>
            <person name="Yasunaga T."/>
            <person name="Kuhara S."/>
            <person name="Shiba T."/>
            <person name="Hattori M."/>
            <person name="Shinagawa H."/>
        </authorList>
    </citation>
    <scope>NUCLEOTIDE SEQUENCE [LARGE SCALE GENOMIC DNA]</scope>
    <source>
        <strain>O157:H7 / Sakai / RIMD 0509952 / EHEC</strain>
    </source>
</reference>
<proteinExistence type="inferred from homology"/>
<name>RL28_ECO57</name>
<evidence type="ECO:0000250" key="1"/>
<evidence type="ECO:0000305" key="2"/>
<keyword id="KW-1185">Reference proteome</keyword>
<keyword id="KW-0687">Ribonucleoprotein</keyword>
<keyword id="KW-0689">Ribosomal protein</keyword>
<accession>P0A7M4</accession>
<accession>P02428</accession>
<dbReference type="EMBL" id="AE005174">
    <property type="protein sequence ID" value="AAG58781.1"/>
    <property type="molecule type" value="Genomic_DNA"/>
</dbReference>
<dbReference type="EMBL" id="BA000007">
    <property type="protein sequence ID" value="BAB37935.1"/>
    <property type="molecule type" value="Genomic_DNA"/>
</dbReference>
<dbReference type="PIR" id="A86040">
    <property type="entry name" value="A86040"/>
</dbReference>
<dbReference type="PIR" id="H91192">
    <property type="entry name" value="H91192"/>
</dbReference>
<dbReference type="RefSeq" id="NP_312539.1">
    <property type="nucleotide sequence ID" value="NC_002695.1"/>
</dbReference>
<dbReference type="RefSeq" id="WP_000091955.1">
    <property type="nucleotide sequence ID" value="NZ_VOAI01000021.1"/>
</dbReference>
<dbReference type="SMR" id="P0A7M4"/>
<dbReference type="STRING" id="155864.Z5061"/>
<dbReference type="GeneID" id="915534"/>
<dbReference type="GeneID" id="93778350"/>
<dbReference type="KEGG" id="ece:Z5061"/>
<dbReference type="KEGG" id="ecs:ECs_4512"/>
<dbReference type="PATRIC" id="fig|386585.9.peg.4728"/>
<dbReference type="eggNOG" id="COG0227">
    <property type="taxonomic scope" value="Bacteria"/>
</dbReference>
<dbReference type="HOGENOM" id="CLU_064548_3_1_6"/>
<dbReference type="OMA" id="LHTKRIW"/>
<dbReference type="Proteomes" id="UP000000558">
    <property type="component" value="Chromosome"/>
</dbReference>
<dbReference type="Proteomes" id="UP000002519">
    <property type="component" value="Chromosome"/>
</dbReference>
<dbReference type="GO" id="GO:0022625">
    <property type="term" value="C:cytosolic large ribosomal subunit"/>
    <property type="evidence" value="ECO:0007669"/>
    <property type="project" value="TreeGrafter"/>
</dbReference>
<dbReference type="GO" id="GO:0003735">
    <property type="term" value="F:structural constituent of ribosome"/>
    <property type="evidence" value="ECO:0007669"/>
    <property type="project" value="InterPro"/>
</dbReference>
<dbReference type="GO" id="GO:0006412">
    <property type="term" value="P:translation"/>
    <property type="evidence" value="ECO:0007669"/>
    <property type="project" value="UniProtKB-UniRule"/>
</dbReference>
<dbReference type="FunFam" id="2.30.170.40:FF:000001">
    <property type="entry name" value="50S ribosomal protein L28"/>
    <property type="match status" value="1"/>
</dbReference>
<dbReference type="Gene3D" id="2.30.170.40">
    <property type="entry name" value="Ribosomal protein L28/L24"/>
    <property type="match status" value="1"/>
</dbReference>
<dbReference type="HAMAP" id="MF_00373">
    <property type="entry name" value="Ribosomal_bL28"/>
    <property type="match status" value="1"/>
</dbReference>
<dbReference type="InterPro" id="IPR026569">
    <property type="entry name" value="Ribosomal_bL28"/>
</dbReference>
<dbReference type="InterPro" id="IPR034704">
    <property type="entry name" value="Ribosomal_bL28/bL31-like_sf"/>
</dbReference>
<dbReference type="InterPro" id="IPR001383">
    <property type="entry name" value="Ribosomal_bL28_bact-type"/>
</dbReference>
<dbReference type="InterPro" id="IPR037147">
    <property type="entry name" value="Ribosomal_bL28_sf"/>
</dbReference>
<dbReference type="NCBIfam" id="TIGR00009">
    <property type="entry name" value="L28"/>
    <property type="match status" value="1"/>
</dbReference>
<dbReference type="PANTHER" id="PTHR13528">
    <property type="entry name" value="39S RIBOSOMAL PROTEIN L28, MITOCHONDRIAL"/>
    <property type="match status" value="1"/>
</dbReference>
<dbReference type="PANTHER" id="PTHR13528:SF2">
    <property type="entry name" value="LARGE RIBOSOMAL SUBUNIT PROTEIN BL28M"/>
    <property type="match status" value="1"/>
</dbReference>
<dbReference type="Pfam" id="PF00830">
    <property type="entry name" value="Ribosomal_L28"/>
    <property type="match status" value="1"/>
</dbReference>
<dbReference type="SUPFAM" id="SSF143800">
    <property type="entry name" value="L28p-like"/>
    <property type="match status" value="1"/>
</dbReference>
<comment type="similarity">
    <text evidence="2">Belongs to the bacterial ribosomal protein bL28 family.</text>
</comment>
<feature type="initiator methionine" description="Removed" evidence="1">
    <location>
        <position position="1"/>
    </location>
</feature>
<feature type="chain" id="PRO_0000178469" description="Large ribosomal subunit protein bL28">
    <location>
        <begin position="2"/>
        <end position="78"/>
    </location>
</feature>
<organism>
    <name type="scientific">Escherichia coli O157:H7</name>
    <dbReference type="NCBI Taxonomy" id="83334"/>
    <lineage>
        <taxon>Bacteria</taxon>
        <taxon>Pseudomonadati</taxon>
        <taxon>Pseudomonadota</taxon>
        <taxon>Gammaproteobacteria</taxon>
        <taxon>Enterobacterales</taxon>
        <taxon>Enterobacteriaceae</taxon>
        <taxon>Escherichia</taxon>
    </lineage>
</organism>
<protein>
    <recommendedName>
        <fullName evidence="2">Large ribosomal subunit protein bL28</fullName>
    </recommendedName>
    <alternativeName>
        <fullName>50S ribosomal protein L28</fullName>
    </alternativeName>
</protein>
<sequence>MSRVCQVTGKRPVTGNNRSHALNATKRRFLPNLHSHRFWVESEKRFVTLRVSAKGMRVIDKKGIDTVLAELRARGEKY</sequence>
<gene>
    <name type="primary">rpmB</name>
    <name type="ordered locus">Z5061</name>
    <name type="ordered locus">ECs4512</name>
</gene>